<comment type="function">
    <text evidence="1">Allows the formation of correctly charged Gln-tRNA(Gln) through the transamidation of misacylated Glu-tRNA(Gln) in the mitochondria. The reaction takes place in the presence of glutamine and ATP through an activated gamma-phospho-Glu-tRNA(Gln).</text>
</comment>
<comment type="catalytic activity">
    <reaction evidence="1">
        <text>L-glutamyl-tRNA(Gln) + L-glutamine + ATP + H2O = L-glutaminyl-tRNA(Gln) + L-glutamate + ADP + phosphate + H(+)</text>
        <dbReference type="Rhea" id="RHEA:17521"/>
        <dbReference type="Rhea" id="RHEA-COMP:9681"/>
        <dbReference type="Rhea" id="RHEA-COMP:9684"/>
        <dbReference type="ChEBI" id="CHEBI:15377"/>
        <dbReference type="ChEBI" id="CHEBI:15378"/>
        <dbReference type="ChEBI" id="CHEBI:29985"/>
        <dbReference type="ChEBI" id="CHEBI:30616"/>
        <dbReference type="ChEBI" id="CHEBI:43474"/>
        <dbReference type="ChEBI" id="CHEBI:58359"/>
        <dbReference type="ChEBI" id="CHEBI:78520"/>
        <dbReference type="ChEBI" id="CHEBI:78521"/>
        <dbReference type="ChEBI" id="CHEBI:456216"/>
    </reaction>
</comment>
<comment type="subunit">
    <text evidence="1">Subunit of the heterotrimeric GatCAB amidotransferase (AdT) complex, composed of A (qrsl1), B (gatb) and C (gatc) subunits.</text>
</comment>
<comment type="subcellular location">
    <subcellularLocation>
        <location evidence="1">Mitochondrion</location>
    </subcellularLocation>
</comment>
<comment type="similarity">
    <text evidence="1">Belongs to the GatC family.</text>
</comment>
<dbReference type="EC" id="6.3.5.-" evidence="1"/>
<dbReference type="EMBL" id="BX547941">
    <property type="protein sequence ID" value="CAM13111.1"/>
    <property type="molecule type" value="Genomic_DNA"/>
</dbReference>
<dbReference type="RefSeq" id="NP_001288258.1">
    <property type="nucleotide sequence ID" value="NM_001301329.1"/>
</dbReference>
<dbReference type="FunCoup" id="A2BHB7">
    <property type="interactions" value="486"/>
</dbReference>
<dbReference type="STRING" id="7955.ENSDARP00000073880"/>
<dbReference type="PaxDb" id="7955-ENSDARP00000073880"/>
<dbReference type="PeptideAtlas" id="A2BHB7"/>
<dbReference type="Ensembl" id="ENSDART00000079424">
    <property type="protein sequence ID" value="ENSDARP00000073880"/>
    <property type="gene ID" value="ENSDARG00000056855"/>
</dbReference>
<dbReference type="GeneID" id="558898"/>
<dbReference type="KEGG" id="dre:558898"/>
<dbReference type="AGR" id="ZFIN:ZDB-GENE-060526-381"/>
<dbReference type="CTD" id="283459"/>
<dbReference type="ZFIN" id="ZDB-GENE-060526-381">
    <property type="gene designation" value="gatc"/>
</dbReference>
<dbReference type="eggNOG" id="KOG4247">
    <property type="taxonomic scope" value="Eukaryota"/>
</dbReference>
<dbReference type="HOGENOM" id="CLU_105899_0_1_1"/>
<dbReference type="InParanoid" id="A2BHB7"/>
<dbReference type="OMA" id="VTEGECA"/>
<dbReference type="OrthoDB" id="5394539at2759"/>
<dbReference type="PhylomeDB" id="A2BHB7"/>
<dbReference type="PRO" id="PR:A2BHB7"/>
<dbReference type="Proteomes" id="UP000000437">
    <property type="component" value="Chromosome 5"/>
</dbReference>
<dbReference type="Bgee" id="ENSDARG00000056855">
    <property type="expression patterns" value="Expressed in granulocyte and 22 other cell types or tissues"/>
</dbReference>
<dbReference type="GO" id="GO:0030956">
    <property type="term" value="C:glutamyl-tRNA(Gln) amidotransferase complex"/>
    <property type="evidence" value="ECO:0000318"/>
    <property type="project" value="GO_Central"/>
</dbReference>
<dbReference type="GO" id="GO:0005739">
    <property type="term" value="C:mitochondrion"/>
    <property type="evidence" value="ECO:0000318"/>
    <property type="project" value="GO_Central"/>
</dbReference>
<dbReference type="GO" id="GO:0005524">
    <property type="term" value="F:ATP binding"/>
    <property type="evidence" value="ECO:0007669"/>
    <property type="project" value="UniProtKB-KW"/>
</dbReference>
<dbReference type="GO" id="GO:0050567">
    <property type="term" value="F:glutaminyl-tRNA synthase (glutamine-hydrolyzing) activity"/>
    <property type="evidence" value="ECO:0007669"/>
    <property type="project" value="UniProtKB-UniRule"/>
</dbReference>
<dbReference type="GO" id="GO:0070681">
    <property type="term" value="P:glutaminyl-tRNAGln biosynthesis via transamidation"/>
    <property type="evidence" value="ECO:0000318"/>
    <property type="project" value="GO_Central"/>
</dbReference>
<dbReference type="GO" id="GO:0032543">
    <property type="term" value="P:mitochondrial translation"/>
    <property type="evidence" value="ECO:0000318"/>
    <property type="project" value="GO_Central"/>
</dbReference>
<dbReference type="GO" id="GO:0006450">
    <property type="term" value="P:regulation of translational fidelity"/>
    <property type="evidence" value="ECO:0007669"/>
    <property type="project" value="InterPro"/>
</dbReference>
<dbReference type="HAMAP" id="MF_00122">
    <property type="entry name" value="GatC"/>
    <property type="match status" value="1"/>
</dbReference>
<dbReference type="InterPro" id="IPR036113">
    <property type="entry name" value="Asp/Glu-ADT_sf_sub_c"/>
</dbReference>
<dbReference type="InterPro" id="IPR003837">
    <property type="entry name" value="GatC"/>
</dbReference>
<dbReference type="NCBIfam" id="TIGR00135">
    <property type="entry name" value="gatC"/>
    <property type="match status" value="1"/>
</dbReference>
<dbReference type="PANTHER" id="PTHR15004">
    <property type="entry name" value="GLUTAMYL-TRNA(GLN) AMIDOTRANSFERASE SUBUNIT C, MITOCHONDRIAL"/>
    <property type="match status" value="1"/>
</dbReference>
<dbReference type="PANTHER" id="PTHR15004:SF0">
    <property type="entry name" value="GLUTAMYL-TRNA(GLN) AMIDOTRANSFERASE SUBUNIT C, MITOCHONDRIAL"/>
    <property type="match status" value="1"/>
</dbReference>
<dbReference type="Pfam" id="PF02686">
    <property type="entry name" value="GatC"/>
    <property type="match status" value="1"/>
</dbReference>
<dbReference type="SUPFAM" id="SSF141000">
    <property type="entry name" value="Glu-tRNAGln amidotransferase C subunit"/>
    <property type="match status" value="1"/>
</dbReference>
<sequence length="184" mass="20456">MLCKCAAGALRALRPATPRIGVLNLTALSASLSANRTSWSRWTHMRDSSNAAWTPKVPQTPTWEPVAESQLPPATRISPDLVDKLERLALVDFGSEEGVDCLEKAIRFADQLHVINTDGVEPMDSVLEDRELYLRDDTVTEGECAEELLQLAKHTVEEYFLAPPGNIPLPKREERSAMLKDSEF</sequence>
<feature type="transit peptide" description="Mitochondrion" evidence="1">
    <location>
        <begin position="1"/>
        <end position="47"/>
    </location>
</feature>
<feature type="chain" id="PRO_0000413291" description="Glutamyl-tRNA(Gln) amidotransferase subunit C, mitochondrial">
    <location>
        <begin position="48"/>
        <end position="184"/>
    </location>
</feature>
<accession>A2BHB7</accession>
<gene>
    <name type="primary">gatc</name>
    <name type="ORF">si:rp71-1c23.3</name>
</gene>
<name>GATC_DANRE</name>
<proteinExistence type="inferred from homology"/>
<protein>
    <recommendedName>
        <fullName evidence="1">Glutamyl-tRNA(Gln) amidotransferase subunit C, mitochondrial</fullName>
        <shortName evidence="1">Glu-AdT subunit C</shortName>
        <ecNumber evidence="1">6.3.5.-</ecNumber>
    </recommendedName>
</protein>
<evidence type="ECO:0000255" key="1">
    <source>
        <dbReference type="HAMAP-Rule" id="MF_03149"/>
    </source>
</evidence>
<keyword id="KW-0067">ATP-binding</keyword>
<keyword id="KW-0436">Ligase</keyword>
<keyword id="KW-0496">Mitochondrion</keyword>
<keyword id="KW-0547">Nucleotide-binding</keyword>
<keyword id="KW-0648">Protein biosynthesis</keyword>
<keyword id="KW-1185">Reference proteome</keyword>
<keyword id="KW-0809">Transit peptide</keyword>
<organism>
    <name type="scientific">Danio rerio</name>
    <name type="common">Zebrafish</name>
    <name type="synonym">Brachydanio rerio</name>
    <dbReference type="NCBI Taxonomy" id="7955"/>
    <lineage>
        <taxon>Eukaryota</taxon>
        <taxon>Metazoa</taxon>
        <taxon>Chordata</taxon>
        <taxon>Craniata</taxon>
        <taxon>Vertebrata</taxon>
        <taxon>Euteleostomi</taxon>
        <taxon>Actinopterygii</taxon>
        <taxon>Neopterygii</taxon>
        <taxon>Teleostei</taxon>
        <taxon>Ostariophysi</taxon>
        <taxon>Cypriniformes</taxon>
        <taxon>Danionidae</taxon>
        <taxon>Danioninae</taxon>
        <taxon>Danio</taxon>
    </lineage>
</organism>
<reference key="1">
    <citation type="journal article" date="2013" name="Nature">
        <title>The zebrafish reference genome sequence and its relationship to the human genome.</title>
        <authorList>
            <person name="Howe K."/>
            <person name="Clark M.D."/>
            <person name="Torroja C.F."/>
            <person name="Torrance J."/>
            <person name="Berthelot C."/>
            <person name="Muffato M."/>
            <person name="Collins J.E."/>
            <person name="Humphray S."/>
            <person name="McLaren K."/>
            <person name="Matthews L."/>
            <person name="McLaren S."/>
            <person name="Sealy I."/>
            <person name="Caccamo M."/>
            <person name="Churcher C."/>
            <person name="Scott C."/>
            <person name="Barrett J.C."/>
            <person name="Koch R."/>
            <person name="Rauch G.J."/>
            <person name="White S."/>
            <person name="Chow W."/>
            <person name="Kilian B."/>
            <person name="Quintais L.T."/>
            <person name="Guerra-Assuncao J.A."/>
            <person name="Zhou Y."/>
            <person name="Gu Y."/>
            <person name="Yen J."/>
            <person name="Vogel J.H."/>
            <person name="Eyre T."/>
            <person name="Redmond S."/>
            <person name="Banerjee R."/>
            <person name="Chi J."/>
            <person name="Fu B."/>
            <person name="Langley E."/>
            <person name="Maguire S.F."/>
            <person name="Laird G.K."/>
            <person name="Lloyd D."/>
            <person name="Kenyon E."/>
            <person name="Donaldson S."/>
            <person name="Sehra H."/>
            <person name="Almeida-King J."/>
            <person name="Loveland J."/>
            <person name="Trevanion S."/>
            <person name="Jones M."/>
            <person name="Quail M."/>
            <person name="Willey D."/>
            <person name="Hunt A."/>
            <person name="Burton J."/>
            <person name="Sims S."/>
            <person name="McLay K."/>
            <person name="Plumb B."/>
            <person name="Davis J."/>
            <person name="Clee C."/>
            <person name="Oliver K."/>
            <person name="Clark R."/>
            <person name="Riddle C."/>
            <person name="Elliot D."/>
            <person name="Threadgold G."/>
            <person name="Harden G."/>
            <person name="Ware D."/>
            <person name="Begum S."/>
            <person name="Mortimore B."/>
            <person name="Kerry G."/>
            <person name="Heath P."/>
            <person name="Phillimore B."/>
            <person name="Tracey A."/>
            <person name="Corby N."/>
            <person name="Dunn M."/>
            <person name="Johnson C."/>
            <person name="Wood J."/>
            <person name="Clark S."/>
            <person name="Pelan S."/>
            <person name="Griffiths G."/>
            <person name="Smith M."/>
            <person name="Glithero R."/>
            <person name="Howden P."/>
            <person name="Barker N."/>
            <person name="Lloyd C."/>
            <person name="Stevens C."/>
            <person name="Harley J."/>
            <person name="Holt K."/>
            <person name="Panagiotidis G."/>
            <person name="Lovell J."/>
            <person name="Beasley H."/>
            <person name="Henderson C."/>
            <person name="Gordon D."/>
            <person name="Auger K."/>
            <person name="Wright D."/>
            <person name="Collins J."/>
            <person name="Raisen C."/>
            <person name="Dyer L."/>
            <person name="Leung K."/>
            <person name="Robertson L."/>
            <person name="Ambridge K."/>
            <person name="Leongamornlert D."/>
            <person name="McGuire S."/>
            <person name="Gilderthorp R."/>
            <person name="Griffiths C."/>
            <person name="Manthravadi D."/>
            <person name="Nichol S."/>
            <person name="Barker G."/>
            <person name="Whitehead S."/>
            <person name="Kay M."/>
            <person name="Brown J."/>
            <person name="Murnane C."/>
            <person name="Gray E."/>
            <person name="Humphries M."/>
            <person name="Sycamore N."/>
            <person name="Barker D."/>
            <person name="Saunders D."/>
            <person name="Wallis J."/>
            <person name="Babbage A."/>
            <person name="Hammond S."/>
            <person name="Mashreghi-Mohammadi M."/>
            <person name="Barr L."/>
            <person name="Martin S."/>
            <person name="Wray P."/>
            <person name="Ellington A."/>
            <person name="Matthews N."/>
            <person name="Ellwood M."/>
            <person name="Woodmansey R."/>
            <person name="Clark G."/>
            <person name="Cooper J."/>
            <person name="Tromans A."/>
            <person name="Grafham D."/>
            <person name="Skuce C."/>
            <person name="Pandian R."/>
            <person name="Andrews R."/>
            <person name="Harrison E."/>
            <person name="Kimberley A."/>
            <person name="Garnett J."/>
            <person name="Fosker N."/>
            <person name="Hall R."/>
            <person name="Garner P."/>
            <person name="Kelly D."/>
            <person name="Bird C."/>
            <person name="Palmer S."/>
            <person name="Gehring I."/>
            <person name="Berger A."/>
            <person name="Dooley C.M."/>
            <person name="Ersan-Urun Z."/>
            <person name="Eser C."/>
            <person name="Geiger H."/>
            <person name="Geisler M."/>
            <person name="Karotki L."/>
            <person name="Kirn A."/>
            <person name="Konantz J."/>
            <person name="Konantz M."/>
            <person name="Oberlander M."/>
            <person name="Rudolph-Geiger S."/>
            <person name="Teucke M."/>
            <person name="Lanz C."/>
            <person name="Raddatz G."/>
            <person name="Osoegawa K."/>
            <person name="Zhu B."/>
            <person name="Rapp A."/>
            <person name="Widaa S."/>
            <person name="Langford C."/>
            <person name="Yang F."/>
            <person name="Schuster S.C."/>
            <person name="Carter N.P."/>
            <person name="Harrow J."/>
            <person name="Ning Z."/>
            <person name="Herrero J."/>
            <person name="Searle S.M."/>
            <person name="Enright A."/>
            <person name="Geisler R."/>
            <person name="Plasterk R.H."/>
            <person name="Lee C."/>
            <person name="Westerfield M."/>
            <person name="de Jong P.J."/>
            <person name="Zon L.I."/>
            <person name="Postlethwait J.H."/>
            <person name="Nusslein-Volhard C."/>
            <person name="Hubbard T.J."/>
            <person name="Roest Crollius H."/>
            <person name="Rogers J."/>
            <person name="Stemple D.L."/>
        </authorList>
    </citation>
    <scope>NUCLEOTIDE SEQUENCE [LARGE SCALE GENOMIC DNA]</scope>
    <source>
        <strain>Tuebingen</strain>
    </source>
</reference>